<reference key="1">
    <citation type="journal article" date="2004" name="Arch. Biochem. Biophys.">
        <title>Molecular cloning and biological characterization of novel antimicrobial peptides, pilosulin 3 and pilosulin 4, from a species of the Australian ant genus Myrmecia.</title>
        <authorList>
            <person name="Inagaki H."/>
            <person name="Akagi M."/>
            <person name="Imai H.T."/>
            <person name="Taylor R.W."/>
            <person name="Kubo T."/>
        </authorList>
    </citation>
    <scope>NUCLEOTIDE SEQUENCE [MRNA]</scope>
    <scope>FUNCTION</scope>
    <scope>SYNTHESIS OF 49-84</scope>
</reference>
<reference key="2">
    <citation type="journal article" date="2016" name="Toxins">
        <title>The biochemical toxin arsenal from ant venoms.</title>
        <authorList>
            <person name="Touchard A."/>
            <person name="Aili S.R."/>
            <person name="Fox E.G."/>
            <person name="Escoubas P."/>
            <person name="Orivel J."/>
            <person name="Nicholson G.M."/>
            <person name="Dejean A."/>
        </authorList>
    </citation>
    <scope>REVIEW</scope>
    <scope>NOMENCLATURE</scope>
</reference>
<evidence type="ECO:0000255" key="1"/>
<evidence type="ECO:0000269" key="2">
    <source>
    </source>
</evidence>
<evidence type="ECO:0000303" key="3">
    <source>
    </source>
</evidence>
<evidence type="ECO:0000303" key="4">
    <source>
    </source>
</evidence>
<evidence type="ECO:0000305" key="5"/>
<evidence type="ECO:0000305" key="6">
    <source>
    </source>
</evidence>
<protein>
    <recommendedName>
        <fullName evidence="5">M-myrmeciitoxin-Mb2a</fullName>
        <shortName evidence="5">M-MIITX-Mb2a</shortName>
    </recommendedName>
    <alternativeName>
        <fullName evidence="4">M-myrmeciitoxin-Mp3a</fullName>
        <shortName evidence="4">M-MIITX-Mp3a</shortName>
    </alternativeName>
    <alternativeName>
        <fullName evidence="3">Pilosulin-4</fullName>
    </alternativeName>
</protein>
<sequence>MKLSCLLLTLAIIFVLTIVHAPNVKAKALADPESDAVGFADAVGEADPFDITKLNIKKLTKATCKVISKGASMCKVLFDKKKQE</sequence>
<accession>Q68Y22</accession>
<organism>
    <name type="scientific">Myrmecia banksi</name>
    <name type="common">Jack jumper ant</name>
    <name type="synonym">Australian jumper ant</name>
    <dbReference type="NCBI Taxonomy" id="36171"/>
    <lineage>
        <taxon>Eukaryota</taxon>
        <taxon>Metazoa</taxon>
        <taxon>Ecdysozoa</taxon>
        <taxon>Arthropoda</taxon>
        <taxon>Hexapoda</taxon>
        <taxon>Insecta</taxon>
        <taxon>Pterygota</taxon>
        <taxon>Neoptera</taxon>
        <taxon>Endopterygota</taxon>
        <taxon>Hymenoptera</taxon>
        <taxon>Apocrita</taxon>
        <taxon>Aculeata</taxon>
        <taxon>Formicoidea</taxon>
        <taxon>Formicidae</taxon>
        <taxon>Myrmeciinae</taxon>
        <taxon>Myrmeciini</taxon>
        <taxon>Myrmecia</taxon>
    </lineage>
</organism>
<feature type="signal peptide" evidence="1">
    <location>
        <begin position="1"/>
        <end position="21"/>
    </location>
</feature>
<feature type="propeptide" id="PRO_0000035168" evidence="6">
    <location>
        <begin position="22"/>
        <end position="48"/>
    </location>
</feature>
<feature type="peptide" id="PRO_0000035169" description="M-myrmeciitoxin-Mb2a" evidence="6">
    <location>
        <begin position="49"/>
        <end position="84"/>
    </location>
</feature>
<comment type="function">
    <text evidence="2">Shows activity against E.coli and S.aureus (MIC&lt;6.25 uM), moderate activity against P.aeruginosa (MIC&lt;25 uM), weak activity against B.subtilis (MIC&lt;50 uM), and has no effect against L.garvieae, C.albicans, and S.cerevisiae. Has no hemolytic nor cytolytic activity. Causes an IgE-independent histamine release.</text>
</comment>
<comment type="subcellular location">
    <subcellularLocation>
        <location evidence="6">Secreted</location>
    </subcellularLocation>
</comment>
<comment type="tissue specificity">
    <text evidence="6">Expressed by the venom gland.</text>
</comment>
<comment type="similarity">
    <text evidence="5">Belongs to the formicidae venom precursor-01 superfamily. Ant pilosulin family.</text>
</comment>
<comment type="caution">
    <text evidence="5">M.banksi is a member of the M.pilosula complex, but is clearly distinct from M.pilosula species. It is why the nomenclature proposed by Touchard et al., 2016 is slightly modified in this entry.</text>
</comment>
<proteinExistence type="inferred from homology"/>
<dbReference type="EMBL" id="AB128065">
    <property type="protein sequence ID" value="BAD36780.1"/>
    <property type="molecule type" value="mRNA"/>
</dbReference>
<dbReference type="Allergome" id="3576">
    <property type="allergen name" value="Myr p 3"/>
</dbReference>
<dbReference type="Allergome" id="3577">
    <property type="allergen name" value="Myr p 3.0101"/>
</dbReference>
<dbReference type="GO" id="GO:0005576">
    <property type="term" value="C:extracellular region"/>
    <property type="evidence" value="ECO:0007669"/>
    <property type="project" value="UniProtKB-SubCell"/>
</dbReference>
<dbReference type="GO" id="GO:0042742">
    <property type="term" value="P:defense response to bacterium"/>
    <property type="evidence" value="ECO:0007669"/>
    <property type="project" value="UniProtKB-KW"/>
</dbReference>
<dbReference type="InterPro" id="IPR049518">
    <property type="entry name" value="Pilosulin"/>
</dbReference>
<dbReference type="Pfam" id="PF17499">
    <property type="entry name" value="Pilosulin"/>
    <property type="match status" value="1"/>
</dbReference>
<keyword id="KW-0044">Antibiotic</keyword>
<keyword id="KW-0929">Antimicrobial</keyword>
<keyword id="KW-0964">Secreted</keyword>
<keyword id="KW-0732">Signal</keyword>
<name>TX2A_MYRBA</name>